<dbReference type="EC" id="3.1.-.-" evidence="1"/>
<dbReference type="EMBL" id="CP000230">
    <property type="protein sequence ID" value="ABC20983.1"/>
    <property type="molecule type" value="Genomic_DNA"/>
</dbReference>
<dbReference type="RefSeq" id="YP_425270.1">
    <property type="nucleotide sequence ID" value="NC_007643.1"/>
</dbReference>
<dbReference type="SMR" id="Q2RY12"/>
<dbReference type="STRING" id="269796.Rru_A0178"/>
<dbReference type="EnsemblBacteria" id="ABC20983">
    <property type="protein sequence ID" value="ABC20983"/>
    <property type="gene ID" value="Rru_A0178"/>
</dbReference>
<dbReference type="KEGG" id="rru:Rru_A0178"/>
<dbReference type="PATRIC" id="fig|269796.9.peg.232"/>
<dbReference type="eggNOG" id="COG1343">
    <property type="taxonomic scope" value="Bacteria"/>
</dbReference>
<dbReference type="HOGENOM" id="CLU_161124_3_1_5"/>
<dbReference type="PhylomeDB" id="Q2RY12"/>
<dbReference type="Proteomes" id="UP000001929">
    <property type="component" value="Chromosome"/>
</dbReference>
<dbReference type="GO" id="GO:0046872">
    <property type="term" value="F:metal ion binding"/>
    <property type="evidence" value="ECO:0007669"/>
    <property type="project" value="UniProtKB-UniRule"/>
</dbReference>
<dbReference type="GO" id="GO:0004521">
    <property type="term" value="F:RNA endonuclease activity"/>
    <property type="evidence" value="ECO:0007669"/>
    <property type="project" value="InterPro"/>
</dbReference>
<dbReference type="GO" id="GO:0051607">
    <property type="term" value="P:defense response to virus"/>
    <property type="evidence" value="ECO:0007669"/>
    <property type="project" value="UniProtKB-UniRule"/>
</dbReference>
<dbReference type="GO" id="GO:0043571">
    <property type="term" value="P:maintenance of CRISPR repeat elements"/>
    <property type="evidence" value="ECO:0007669"/>
    <property type="project" value="UniProtKB-UniRule"/>
</dbReference>
<dbReference type="CDD" id="cd09725">
    <property type="entry name" value="Cas2_I_II_III"/>
    <property type="match status" value="1"/>
</dbReference>
<dbReference type="Gene3D" id="3.30.70.240">
    <property type="match status" value="1"/>
</dbReference>
<dbReference type="HAMAP" id="MF_01471">
    <property type="entry name" value="Cas2"/>
    <property type="match status" value="1"/>
</dbReference>
<dbReference type="InterPro" id="IPR021127">
    <property type="entry name" value="CRISPR_associated_Cas2"/>
</dbReference>
<dbReference type="InterPro" id="IPR019199">
    <property type="entry name" value="Virulence_VapD/CRISPR_Cas2"/>
</dbReference>
<dbReference type="NCBIfam" id="TIGR01573">
    <property type="entry name" value="cas2"/>
    <property type="match status" value="1"/>
</dbReference>
<dbReference type="PANTHER" id="PTHR34405">
    <property type="entry name" value="CRISPR-ASSOCIATED ENDORIBONUCLEASE CAS2"/>
    <property type="match status" value="1"/>
</dbReference>
<dbReference type="PANTHER" id="PTHR34405:SF3">
    <property type="entry name" value="CRISPR-ASSOCIATED ENDORIBONUCLEASE CAS2 3"/>
    <property type="match status" value="1"/>
</dbReference>
<dbReference type="Pfam" id="PF09827">
    <property type="entry name" value="CRISPR_Cas2"/>
    <property type="match status" value="1"/>
</dbReference>
<dbReference type="SUPFAM" id="SSF143430">
    <property type="entry name" value="TTP0101/SSO1404-like"/>
    <property type="match status" value="1"/>
</dbReference>
<organism>
    <name type="scientific">Rhodospirillum rubrum (strain ATCC 11170 / ATH 1.1.1 / DSM 467 / LMG 4362 / NCIMB 8255 / S1)</name>
    <dbReference type="NCBI Taxonomy" id="269796"/>
    <lineage>
        <taxon>Bacteria</taxon>
        <taxon>Pseudomonadati</taxon>
        <taxon>Pseudomonadota</taxon>
        <taxon>Alphaproteobacteria</taxon>
        <taxon>Rhodospirillales</taxon>
        <taxon>Rhodospirillaceae</taxon>
        <taxon>Rhodospirillum</taxon>
    </lineage>
</organism>
<keyword id="KW-0051">Antiviral defense</keyword>
<keyword id="KW-0255">Endonuclease</keyword>
<keyword id="KW-0378">Hydrolase</keyword>
<keyword id="KW-0460">Magnesium</keyword>
<keyword id="KW-0479">Metal-binding</keyword>
<keyword id="KW-0540">Nuclease</keyword>
<keyword id="KW-1185">Reference proteome</keyword>
<evidence type="ECO:0000255" key="1">
    <source>
        <dbReference type="HAMAP-Rule" id="MF_01471"/>
    </source>
</evidence>
<proteinExistence type="inferred from homology"/>
<comment type="function">
    <text evidence="1">CRISPR (clustered regularly interspaced short palindromic repeat), is an adaptive immune system that provides protection against mobile genetic elements (viruses, transposable elements and conjugative plasmids). CRISPR clusters contain sequences complementary to antecedent mobile elements and target invading nucleic acids. CRISPR clusters are transcribed and processed into CRISPR RNA (crRNA). Functions as a ssRNA-specific endoribonuclease. Involved in the integration of spacer DNA into the CRISPR cassette.</text>
</comment>
<comment type="cofactor">
    <cofactor evidence="1">
        <name>Mg(2+)</name>
        <dbReference type="ChEBI" id="CHEBI:18420"/>
    </cofactor>
</comment>
<comment type="subunit">
    <text evidence="1">Homodimer, forms a heterotetramer with a Cas1 homodimer.</text>
</comment>
<comment type="similarity">
    <text evidence="1">Belongs to the CRISPR-associated endoribonuclease Cas2 protein family.</text>
</comment>
<accession>Q2RY12</accession>
<feature type="chain" id="PRO_0000417726" description="CRISPR-associated endoribonuclease Cas2 1">
    <location>
        <begin position="1"/>
        <end position="102"/>
    </location>
</feature>
<feature type="binding site" evidence="1">
    <location>
        <position position="17"/>
    </location>
    <ligand>
        <name>Mg(2+)</name>
        <dbReference type="ChEBI" id="CHEBI:18420"/>
        <note>catalytic</note>
    </ligand>
</feature>
<gene>
    <name evidence="1" type="primary">cas2-1</name>
    <name type="ordered locus">Rru_A0178</name>
</gene>
<protein>
    <recommendedName>
        <fullName evidence="1">CRISPR-associated endoribonuclease Cas2 1</fullName>
        <ecNumber evidence="1">3.1.-.-</ecNumber>
    </recommendedName>
</protein>
<sequence length="102" mass="11600">MGTRRSNAEHAYVVAYDIADPKRWRQVFKTMKGYGQWVQLSVFQCRLDGGRRIAMASILESLIDRETDHVLMLDLGPAEDVDLAVESLGKAFETLERQAMII</sequence>
<name>CAS2A_RHORT</name>
<reference key="1">
    <citation type="journal article" date="2011" name="Stand. Genomic Sci.">
        <title>Complete genome sequence of Rhodospirillum rubrum type strain (S1).</title>
        <authorList>
            <person name="Munk A.C."/>
            <person name="Copeland A."/>
            <person name="Lucas S."/>
            <person name="Lapidus A."/>
            <person name="Del Rio T.G."/>
            <person name="Barry K."/>
            <person name="Detter J.C."/>
            <person name="Hammon N."/>
            <person name="Israni S."/>
            <person name="Pitluck S."/>
            <person name="Brettin T."/>
            <person name="Bruce D."/>
            <person name="Han C."/>
            <person name="Tapia R."/>
            <person name="Gilna P."/>
            <person name="Schmutz J."/>
            <person name="Larimer F."/>
            <person name="Land M."/>
            <person name="Kyrpides N.C."/>
            <person name="Mavromatis K."/>
            <person name="Richardson P."/>
            <person name="Rohde M."/>
            <person name="Goeker M."/>
            <person name="Klenk H.P."/>
            <person name="Zhang Y."/>
            <person name="Roberts G.P."/>
            <person name="Reslewic S."/>
            <person name="Schwartz D.C."/>
        </authorList>
    </citation>
    <scope>NUCLEOTIDE SEQUENCE [LARGE SCALE GENOMIC DNA]</scope>
    <source>
        <strain>ATCC 11170 / ATH 1.1.1 / DSM 467 / LMG 4362 / NCIMB 8255 / S1</strain>
    </source>
</reference>